<accession>Q7MTF5</accession>
<evidence type="ECO:0000255" key="1">
    <source>
        <dbReference type="HAMAP-Rule" id="MF_00201"/>
    </source>
</evidence>
<organism>
    <name type="scientific">Porphyromonas gingivalis (strain ATCC BAA-308 / W83)</name>
    <dbReference type="NCBI Taxonomy" id="242619"/>
    <lineage>
        <taxon>Bacteria</taxon>
        <taxon>Pseudomonadati</taxon>
        <taxon>Bacteroidota</taxon>
        <taxon>Bacteroidia</taxon>
        <taxon>Bacteroidales</taxon>
        <taxon>Porphyromonadaceae</taxon>
        <taxon>Porphyromonas</taxon>
    </lineage>
</organism>
<feature type="chain" id="PRO_1000193409" description="DNA repair protein RecO">
    <location>
        <begin position="1"/>
        <end position="245"/>
    </location>
</feature>
<sequence length="245" mass="28080">MIIVSRAIVLHNTAYNDSYSIAHLFSRESGRVSYLIPRSSKRGKSGGSLRLLISPLNELEITAEHKQHRDLHFIKEAKLCSLHGRIQSDPVRNSIALFLAEFLYLILRLPEADTNLYDFVAFSIDKLEEMDGPMANFHLAFLFRLLVPLGLIPDLQFGGSVIPRWFDPADGRFVPNAPAHGRGIPPHQSTYLQLFSRITFDNMKAFRLSRAERRQVLDYLVDYYRFHLPPFPLLKTPDILSTLFD</sequence>
<name>RECO_PORGI</name>
<dbReference type="EMBL" id="AE015924">
    <property type="protein sequence ID" value="AAQ66978.1"/>
    <property type="molecule type" value="Genomic_DNA"/>
</dbReference>
<dbReference type="RefSeq" id="WP_010956471.1">
    <property type="nucleotide sequence ID" value="NC_002950.2"/>
</dbReference>
<dbReference type="SMR" id="Q7MTF5"/>
<dbReference type="STRING" id="242619.PG_2009"/>
<dbReference type="EnsemblBacteria" id="AAQ66978">
    <property type="protein sequence ID" value="AAQ66978"/>
    <property type="gene ID" value="PG_2009"/>
</dbReference>
<dbReference type="KEGG" id="pgi:PG_2009"/>
<dbReference type="eggNOG" id="COG1381">
    <property type="taxonomic scope" value="Bacteria"/>
</dbReference>
<dbReference type="HOGENOM" id="CLU_087596_0_0_10"/>
<dbReference type="Proteomes" id="UP000000588">
    <property type="component" value="Chromosome"/>
</dbReference>
<dbReference type="GO" id="GO:0043590">
    <property type="term" value="C:bacterial nucleoid"/>
    <property type="evidence" value="ECO:0007669"/>
    <property type="project" value="TreeGrafter"/>
</dbReference>
<dbReference type="GO" id="GO:0006310">
    <property type="term" value="P:DNA recombination"/>
    <property type="evidence" value="ECO:0007669"/>
    <property type="project" value="UniProtKB-UniRule"/>
</dbReference>
<dbReference type="GO" id="GO:0006302">
    <property type="term" value="P:double-strand break repair"/>
    <property type="evidence" value="ECO:0007669"/>
    <property type="project" value="TreeGrafter"/>
</dbReference>
<dbReference type="Gene3D" id="2.40.50.140">
    <property type="entry name" value="Nucleic acid-binding proteins"/>
    <property type="match status" value="1"/>
</dbReference>
<dbReference type="Gene3D" id="1.20.1440.120">
    <property type="entry name" value="Recombination protein O, C-terminal domain"/>
    <property type="match status" value="1"/>
</dbReference>
<dbReference type="Gene3D" id="6.20.220.20">
    <property type="entry name" value="Recombination protein O, zinc-binding domain"/>
    <property type="match status" value="1"/>
</dbReference>
<dbReference type="HAMAP" id="MF_00201">
    <property type="entry name" value="RecO"/>
    <property type="match status" value="1"/>
</dbReference>
<dbReference type="InterPro" id="IPR037278">
    <property type="entry name" value="ARFGAP/RecO"/>
</dbReference>
<dbReference type="InterPro" id="IPR022572">
    <property type="entry name" value="DNA_rep/recomb_RecO_N"/>
</dbReference>
<dbReference type="InterPro" id="IPR012340">
    <property type="entry name" value="NA-bd_OB-fold"/>
</dbReference>
<dbReference type="InterPro" id="IPR003717">
    <property type="entry name" value="RecO"/>
</dbReference>
<dbReference type="InterPro" id="IPR042242">
    <property type="entry name" value="RecO_C"/>
</dbReference>
<dbReference type="PANTHER" id="PTHR33991">
    <property type="entry name" value="DNA REPAIR PROTEIN RECO"/>
    <property type="match status" value="1"/>
</dbReference>
<dbReference type="PANTHER" id="PTHR33991:SF1">
    <property type="entry name" value="DNA REPAIR PROTEIN RECO"/>
    <property type="match status" value="1"/>
</dbReference>
<dbReference type="Pfam" id="PF02565">
    <property type="entry name" value="RecO_C"/>
    <property type="match status" value="1"/>
</dbReference>
<dbReference type="Pfam" id="PF11967">
    <property type="entry name" value="RecO_N"/>
    <property type="match status" value="1"/>
</dbReference>
<dbReference type="SUPFAM" id="SSF57863">
    <property type="entry name" value="ArfGap/RecO-like zinc finger"/>
    <property type="match status" value="1"/>
</dbReference>
<dbReference type="SUPFAM" id="SSF50249">
    <property type="entry name" value="Nucleic acid-binding proteins"/>
    <property type="match status" value="1"/>
</dbReference>
<protein>
    <recommendedName>
        <fullName evidence="1">DNA repair protein RecO</fullName>
    </recommendedName>
    <alternativeName>
        <fullName evidence="1">Recombination protein O</fullName>
    </alternativeName>
</protein>
<gene>
    <name evidence="1" type="primary">recO</name>
    <name type="ordered locus">PG_2009</name>
</gene>
<keyword id="KW-0227">DNA damage</keyword>
<keyword id="KW-0233">DNA recombination</keyword>
<keyword id="KW-0234">DNA repair</keyword>
<keyword id="KW-1185">Reference proteome</keyword>
<proteinExistence type="inferred from homology"/>
<comment type="function">
    <text evidence="1">Involved in DNA repair and RecF pathway recombination.</text>
</comment>
<comment type="similarity">
    <text evidence="1">Belongs to the RecO family.</text>
</comment>
<reference key="1">
    <citation type="journal article" date="2003" name="J. Bacteriol.">
        <title>Complete genome sequence of the oral pathogenic bacterium Porphyromonas gingivalis strain W83.</title>
        <authorList>
            <person name="Nelson K.E."/>
            <person name="Fleischmann R.D."/>
            <person name="DeBoy R.T."/>
            <person name="Paulsen I.T."/>
            <person name="Fouts D.E."/>
            <person name="Eisen J.A."/>
            <person name="Daugherty S.C."/>
            <person name="Dodson R.J."/>
            <person name="Durkin A.S."/>
            <person name="Gwinn M.L."/>
            <person name="Haft D.H."/>
            <person name="Kolonay J.F."/>
            <person name="Nelson W.C."/>
            <person name="Mason T.M."/>
            <person name="Tallon L."/>
            <person name="Gray J."/>
            <person name="Granger D."/>
            <person name="Tettelin H."/>
            <person name="Dong H."/>
            <person name="Galvin J.L."/>
            <person name="Duncan M.J."/>
            <person name="Dewhirst F.E."/>
            <person name="Fraser C.M."/>
        </authorList>
    </citation>
    <scope>NUCLEOTIDE SEQUENCE [LARGE SCALE GENOMIC DNA]</scope>
    <source>
        <strain>ATCC BAA-308 / W83</strain>
    </source>
</reference>